<proteinExistence type="evidence at protein level"/>
<accession>Q91V27</accession>
<accession>Q3UFV7</accession>
<accession>Q99N53</accession>
<name>MELPH_MOUSE</name>
<gene>
    <name type="primary">Mlph</name>
    <name type="synonym">Ln</name>
    <name type="synonym">Slac2a</name>
</gene>
<dbReference type="EMBL" id="AB057759">
    <property type="protein sequence ID" value="BAB41087.1"/>
    <property type="molecule type" value="mRNA"/>
</dbReference>
<dbReference type="EMBL" id="AF384098">
    <property type="protein sequence ID" value="AAK97435.1"/>
    <property type="molecule type" value="mRNA"/>
</dbReference>
<dbReference type="EMBL" id="AK148274">
    <property type="protein sequence ID" value="BAE28452.1"/>
    <property type="molecule type" value="mRNA"/>
</dbReference>
<dbReference type="CCDS" id="CCDS15155.1"/>
<dbReference type="RefSeq" id="NP_443748.2">
    <property type="nucleotide sequence ID" value="NM_053015.3"/>
</dbReference>
<dbReference type="PDB" id="2ZET">
    <property type="method" value="X-ray"/>
    <property type="resolution" value="3.00 A"/>
    <property type="chains" value="C/D=1-146"/>
</dbReference>
<dbReference type="PDB" id="4KP3">
    <property type="method" value="X-ray"/>
    <property type="resolution" value="2.40 A"/>
    <property type="chains" value="E/F=170-208"/>
</dbReference>
<dbReference type="PDB" id="4LX2">
    <property type="method" value="X-ray"/>
    <property type="resolution" value="1.50 A"/>
    <property type="chains" value="B=176-201"/>
</dbReference>
<dbReference type="PDBsum" id="2ZET"/>
<dbReference type="PDBsum" id="4KP3"/>
<dbReference type="PDBsum" id="4LX2"/>
<dbReference type="SMR" id="Q91V27"/>
<dbReference type="BioGRID" id="228608">
    <property type="interactions" value="2"/>
</dbReference>
<dbReference type="CORUM" id="Q91V27"/>
<dbReference type="DIP" id="DIP-31495N"/>
<dbReference type="ELM" id="Q91V27"/>
<dbReference type="FunCoup" id="Q91V27">
    <property type="interactions" value="23"/>
</dbReference>
<dbReference type="IntAct" id="Q91V27">
    <property type="interactions" value="3"/>
</dbReference>
<dbReference type="STRING" id="10090.ENSMUSP00000027528"/>
<dbReference type="iPTMnet" id="Q91V27"/>
<dbReference type="PhosphoSitePlus" id="Q91V27"/>
<dbReference type="PaxDb" id="10090-ENSMUSP00000027528"/>
<dbReference type="ProteomicsDB" id="295854"/>
<dbReference type="GeneID" id="171531"/>
<dbReference type="KEGG" id="mmu:171531"/>
<dbReference type="UCSC" id="uc007bzm.2">
    <property type="organism name" value="mouse"/>
</dbReference>
<dbReference type="AGR" id="MGI:2176380"/>
<dbReference type="CTD" id="79083"/>
<dbReference type="MGI" id="MGI:2176380">
    <property type="gene designation" value="Mlph"/>
</dbReference>
<dbReference type="eggNOG" id="ENOG502RJPZ">
    <property type="taxonomic scope" value="Eukaryota"/>
</dbReference>
<dbReference type="InParanoid" id="Q91V27"/>
<dbReference type="OrthoDB" id="10072397at2759"/>
<dbReference type="PhylomeDB" id="Q91V27"/>
<dbReference type="TreeFam" id="TF331599"/>
<dbReference type="Reactome" id="R-MMU-9824585">
    <property type="pathway name" value="Regulation of MITF-M-dependent genes involved in pigmentation"/>
</dbReference>
<dbReference type="BioGRID-ORCS" id="171531">
    <property type="hits" value="2 hits in 75 CRISPR screens"/>
</dbReference>
<dbReference type="ChiTaRS" id="Mlph">
    <property type="organism name" value="mouse"/>
</dbReference>
<dbReference type="EvolutionaryTrace" id="Q91V27"/>
<dbReference type="PRO" id="PR:Q91V27"/>
<dbReference type="Proteomes" id="UP000000589">
    <property type="component" value="Unplaced"/>
</dbReference>
<dbReference type="RNAct" id="Q91V27">
    <property type="molecule type" value="protein"/>
</dbReference>
<dbReference type="GO" id="GO:0015629">
    <property type="term" value="C:actin cytoskeleton"/>
    <property type="evidence" value="ECO:0000314"/>
    <property type="project" value="MGI"/>
</dbReference>
<dbReference type="GO" id="GO:0030864">
    <property type="term" value="C:cortical actin cytoskeleton"/>
    <property type="evidence" value="ECO:0000314"/>
    <property type="project" value="MGI"/>
</dbReference>
<dbReference type="GO" id="GO:0042470">
    <property type="term" value="C:melanosome"/>
    <property type="evidence" value="ECO:0000314"/>
    <property type="project" value="MGI"/>
</dbReference>
<dbReference type="GO" id="GO:0005815">
    <property type="term" value="C:microtubule organizing center"/>
    <property type="evidence" value="ECO:0000314"/>
    <property type="project" value="MGI"/>
</dbReference>
<dbReference type="GO" id="GO:0001725">
    <property type="term" value="C:stress fiber"/>
    <property type="evidence" value="ECO:0000314"/>
    <property type="project" value="MGI"/>
</dbReference>
<dbReference type="GO" id="GO:0016461">
    <property type="term" value="C:unconventional myosin complex"/>
    <property type="evidence" value="ECO:0000315"/>
    <property type="project" value="CAFA"/>
</dbReference>
<dbReference type="GO" id="GO:0003779">
    <property type="term" value="F:actin binding"/>
    <property type="evidence" value="ECO:0000314"/>
    <property type="project" value="MGI"/>
</dbReference>
<dbReference type="GO" id="GO:0051010">
    <property type="term" value="F:microtubule plus-end binding"/>
    <property type="evidence" value="ECO:0000314"/>
    <property type="project" value="MGI"/>
</dbReference>
<dbReference type="GO" id="GO:0060090">
    <property type="term" value="F:molecular adaptor activity"/>
    <property type="evidence" value="ECO:0000314"/>
    <property type="project" value="DisProt"/>
</dbReference>
<dbReference type="GO" id="GO:0017022">
    <property type="term" value="F:myosin binding"/>
    <property type="evidence" value="ECO:0000314"/>
    <property type="project" value="MGI"/>
</dbReference>
<dbReference type="GO" id="GO:0031489">
    <property type="term" value="F:myosin V binding"/>
    <property type="evidence" value="ECO:0000353"/>
    <property type="project" value="CAFA"/>
</dbReference>
<dbReference type="GO" id="GO:0031267">
    <property type="term" value="F:small GTPase binding"/>
    <property type="evidence" value="ECO:0000314"/>
    <property type="project" value="MGI"/>
</dbReference>
<dbReference type="GO" id="GO:0008270">
    <property type="term" value="F:zinc ion binding"/>
    <property type="evidence" value="ECO:0007669"/>
    <property type="project" value="UniProtKB-KW"/>
</dbReference>
<dbReference type="GO" id="GO:0006886">
    <property type="term" value="P:intracellular protein transport"/>
    <property type="evidence" value="ECO:0007669"/>
    <property type="project" value="InterPro"/>
</dbReference>
<dbReference type="GO" id="GO:0030318">
    <property type="term" value="P:melanocyte differentiation"/>
    <property type="evidence" value="ECO:0000315"/>
    <property type="project" value="MGI"/>
</dbReference>
<dbReference type="GO" id="GO:0032400">
    <property type="term" value="P:melanosome localization"/>
    <property type="evidence" value="ECO:0000315"/>
    <property type="project" value="MGI"/>
</dbReference>
<dbReference type="GO" id="GO:0043473">
    <property type="term" value="P:pigmentation"/>
    <property type="evidence" value="ECO:0000315"/>
    <property type="project" value="MGI"/>
</dbReference>
<dbReference type="GO" id="GO:0006605">
    <property type="term" value="P:protein targeting"/>
    <property type="evidence" value="ECO:0000315"/>
    <property type="project" value="MGI"/>
</dbReference>
<dbReference type="CDD" id="cd15752">
    <property type="entry name" value="FYVE_SlaC2-a"/>
    <property type="match status" value="1"/>
</dbReference>
<dbReference type="DisProt" id="DP00541"/>
<dbReference type="FunFam" id="3.30.40.10:FF:000018">
    <property type="entry name" value="Synaptotagmin-like 5, isoform CRA_a"/>
    <property type="match status" value="1"/>
</dbReference>
<dbReference type="Gene3D" id="3.30.40.10">
    <property type="entry name" value="Zinc/RING finger domain, C3HC4 (zinc finger)"/>
    <property type="match status" value="1"/>
</dbReference>
<dbReference type="InterPro" id="IPR041282">
    <property type="entry name" value="FYVE_2"/>
</dbReference>
<dbReference type="InterPro" id="IPR051745">
    <property type="entry name" value="Intracell_Transport_Effector"/>
</dbReference>
<dbReference type="InterPro" id="IPR037442">
    <property type="entry name" value="Melanophilin_FYVE-rel_dom"/>
</dbReference>
<dbReference type="InterPro" id="IPR006788">
    <property type="entry name" value="Myrip/Melanophilin"/>
</dbReference>
<dbReference type="InterPro" id="IPR010911">
    <property type="entry name" value="Rab_BD"/>
</dbReference>
<dbReference type="InterPro" id="IPR011011">
    <property type="entry name" value="Znf_FYVE_PHD"/>
</dbReference>
<dbReference type="InterPro" id="IPR013083">
    <property type="entry name" value="Znf_RING/FYVE/PHD"/>
</dbReference>
<dbReference type="PANTHER" id="PTHR14555:SF1">
    <property type="entry name" value="MELANOPHILIN"/>
    <property type="match status" value="1"/>
</dbReference>
<dbReference type="PANTHER" id="PTHR14555">
    <property type="entry name" value="MYELIN-ASSOCIATED OLIGODENDROCYTIC BASIC PROTEIN MOBP -RELATED"/>
    <property type="match status" value="1"/>
</dbReference>
<dbReference type="Pfam" id="PF02318">
    <property type="entry name" value="FYVE_2"/>
    <property type="match status" value="1"/>
</dbReference>
<dbReference type="Pfam" id="PF04698">
    <property type="entry name" value="Rab_eff_C"/>
    <property type="match status" value="1"/>
</dbReference>
<dbReference type="SUPFAM" id="SSF57903">
    <property type="entry name" value="FYVE/PHD zinc finger"/>
    <property type="match status" value="1"/>
</dbReference>
<dbReference type="PROSITE" id="PS50916">
    <property type="entry name" value="RABBD"/>
    <property type="match status" value="1"/>
</dbReference>
<organism>
    <name type="scientific">Mus musculus</name>
    <name type="common">Mouse</name>
    <dbReference type="NCBI Taxonomy" id="10090"/>
    <lineage>
        <taxon>Eukaryota</taxon>
        <taxon>Metazoa</taxon>
        <taxon>Chordata</taxon>
        <taxon>Craniata</taxon>
        <taxon>Vertebrata</taxon>
        <taxon>Euteleostomi</taxon>
        <taxon>Mammalia</taxon>
        <taxon>Eutheria</taxon>
        <taxon>Euarchontoglires</taxon>
        <taxon>Glires</taxon>
        <taxon>Rodentia</taxon>
        <taxon>Myomorpha</taxon>
        <taxon>Muroidea</taxon>
        <taxon>Muridae</taxon>
        <taxon>Murinae</taxon>
        <taxon>Mus</taxon>
        <taxon>Mus</taxon>
    </lineage>
</organism>
<keyword id="KW-0002">3D-structure</keyword>
<keyword id="KW-0175">Coiled coil</keyword>
<keyword id="KW-0479">Metal-binding</keyword>
<keyword id="KW-1185">Reference proteome</keyword>
<keyword id="KW-0677">Repeat</keyword>
<keyword id="KW-0862">Zinc</keyword>
<keyword id="KW-0863">Zinc-finger</keyword>
<comment type="function">
    <text evidence="4 5">Rab effector protein involved in melanosome transport. Serves as link between melanosome-bound RAB27A and the motor protein MYO5A.</text>
</comment>
<comment type="subunit">
    <text evidence="6 7">Binds RAB27A that has been activated by GTP-binding via its N-terminus. Binds MYO5A via its C-terminal coiled coil domain.</text>
</comment>
<comment type="interaction">
    <interactant intactId="EBI-398308">
        <id>Q91V27</id>
    </interactant>
    <interactant intactId="EBI-398172">
        <id>Q9ERI2</id>
        <label>Rab27a</label>
    </interactant>
    <organismsDiffer>false</organismsDiffer>
    <experiments>2</experiments>
</comment>
<comment type="interaction">
    <interactant intactId="EBI-398308">
        <id>Q91V27</id>
    </interactant>
    <interactant intactId="EBI-11565917">
        <id>Q99P58</id>
        <label>Rab27b</label>
    </interactant>
    <organismsDiffer>false</organismsDiffer>
    <experiments>2</experiments>
</comment>
<comment type="subcellular location">
    <subcellularLocation>
        <location>Melanosome</location>
    </subcellularLocation>
</comment>
<comment type="tissue specificity">
    <text evidence="4">Highly expressed in embryos at day 7; not detectable at day 11. Highly expressed in adult stomach; detected at lower levels in kidney, lung, skin and small intestine. Detected in melanocytes.</text>
</comment>
<sequence>MGKRLDLSTLTDEEAEHVWAVVQRDFDLRRREEERLQGLKGKIQKESSKRELLSDTAHLNETHCARCLQPYRLLLNSRRQCLECSLFVCKSCSHAHPEEQGWLCDPCHLARVVKIGSLEWYYQHVRARFKRFGSAKVIRSLCGRLQGGGGSEPSLEEGNGDSEQTDEDGDLDTEARDQPLNSKKKKRLLSFRDVDFEEDSDHLVQPCSQTLGLSSVPESAHSLQSLSGEPYSEDTTSLEPEGLEETGARALGCRPSPEVQPCSPLPSGEDAHAELDSPAASCKSAFGTTAMPGTDDVRGKHLPSQYLADVDTSDEDSIQGPRAASQHSKRRARTVPETQILELNKRMSAVEHLLVHLENTVLPPSAQEPTVETHPSADTEEETLRRRLEELTSNISGSSTSSEDETKPDGTFLGGSPKVCTDTGHMETQERNPRSPGNPARPTKSTDEELSEMEDRVAMTASEVQQAESEISDIESRIAALRAAGLTVKPSGKPRRKSGIPIFLPRVTEKLDRIPKTPPADPDDQAKMPKATTAVPSLLRRKYSPSSQGVDSGSFDRKSVYRGSLTQRNPNGRRGTARHIFAKPVMAQQP</sequence>
<feature type="chain" id="PRO_0000190223" description="Melanophilin">
    <location>
        <begin position="1"/>
        <end position="590"/>
    </location>
</feature>
<feature type="domain" description="RabBD" evidence="2">
    <location>
        <begin position="4"/>
        <end position="124"/>
    </location>
</feature>
<feature type="zinc finger region" description="FYVE-type">
    <location>
        <begin position="64"/>
        <end position="107"/>
    </location>
</feature>
<feature type="region of interest" description="Disordered" evidence="3">
    <location>
        <begin position="147"/>
        <end position="182"/>
    </location>
</feature>
<feature type="region of interest" description="Disordered" evidence="3">
    <location>
        <begin position="215"/>
        <end position="276"/>
    </location>
</feature>
<feature type="region of interest" description="Disordered" evidence="3">
    <location>
        <begin position="311"/>
        <end position="335"/>
    </location>
</feature>
<feature type="region of interest" description="Disordered" evidence="3">
    <location>
        <begin position="361"/>
        <end position="472"/>
    </location>
</feature>
<feature type="region of interest" description="Disordered" evidence="3">
    <location>
        <begin position="485"/>
        <end position="590"/>
    </location>
</feature>
<feature type="coiled-coil region" evidence="1">
    <location>
        <begin position="339"/>
        <end position="485"/>
    </location>
</feature>
<feature type="compositionally biased region" description="Acidic residues" evidence="3">
    <location>
        <begin position="154"/>
        <end position="172"/>
    </location>
</feature>
<feature type="compositionally biased region" description="Polar residues" evidence="3">
    <location>
        <begin position="215"/>
        <end position="238"/>
    </location>
</feature>
<feature type="compositionally biased region" description="Low complexity" evidence="3">
    <location>
        <begin position="391"/>
        <end position="401"/>
    </location>
</feature>
<feature type="compositionally biased region" description="Basic and acidic residues" evidence="3">
    <location>
        <begin position="424"/>
        <end position="433"/>
    </location>
</feature>
<feature type="sequence conflict" description="In Ref. 3; BAE28452." evidence="8" ref="3">
    <original>R</original>
    <variation>Q</variation>
    <location>
        <position position="192"/>
    </location>
</feature>
<feature type="sequence conflict" description="In Ref. 1; BAB41087." evidence="8" ref="1">
    <original>R</original>
    <variation>H</variation>
    <location>
        <position position="254"/>
    </location>
</feature>
<feature type="sequence conflict" description="In Ref. 3; BAE28452." evidence="8" ref="3">
    <original>R</original>
    <variation>W</variation>
    <location>
        <position position="333"/>
    </location>
</feature>
<feature type="sequence conflict" description="In Ref. 3; BAE28452." evidence="8" ref="3">
    <original>T</original>
    <variation>R</variation>
    <location>
        <position position="360"/>
    </location>
</feature>
<feature type="sequence conflict" description="In Ref. 1; BAB41087." evidence="8" ref="1">
    <original>E</original>
    <variation>Q</variation>
    <location>
        <position position="475"/>
    </location>
</feature>
<feature type="sequence conflict" description="In Ref. 3; BAE28452." evidence="8" ref="3">
    <original>G</original>
    <variation>S</variation>
    <location>
        <position position="499"/>
    </location>
</feature>
<feature type="helix" evidence="9">
    <location>
        <begin position="12"/>
        <end position="53"/>
    </location>
</feature>
<feature type="helix" evidence="9">
    <location>
        <begin position="59"/>
        <end position="61"/>
    </location>
</feature>
<feature type="turn" evidence="9">
    <location>
        <begin position="65"/>
        <end position="67"/>
    </location>
</feature>
<feature type="helix" evidence="9">
    <location>
        <begin position="71"/>
        <end position="73"/>
    </location>
</feature>
<feature type="turn" evidence="9">
    <location>
        <begin position="82"/>
        <end position="84"/>
    </location>
</feature>
<feature type="helix" evidence="9">
    <location>
        <begin position="90"/>
        <end position="92"/>
    </location>
</feature>
<feature type="strand" evidence="9">
    <location>
        <begin position="97"/>
        <end position="101"/>
    </location>
</feature>
<feature type="helix" evidence="9">
    <location>
        <begin position="105"/>
        <end position="117"/>
    </location>
</feature>
<feature type="helix" evidence="9">
    <location>
        <begin position="119"/>
        <end position="126"/>
    </location>
</feature>
<feature type="strand" evidence="9">
    <location>
        <begin position="129"/>
        <end position="131"/>
    </location>
</feature>
<feature type="helix" evidence="9">
    <location>
        <begin position="133"/>
        <end position="140"/>
    </location>
</feature>
<feature type="helix" evidence="10">
    <location>
        <begin position="193"/>
        <end position="195"/>
    </location>
</feature>
<protein>
    <recommendedName>
        <fullName>Melanophilin</fullName>
    </recommendedName>
    <alternativeName>
        <fullName>Exophilin-3</fullName>
    </alternativeName>
    <alternativeName>
        <fullName>Leaden protein</fullName>
    </alternativeName>
    <alternativeName>
        <fullName>Slp homolog lacking C2 domains a</fullName>
        <shortName>SlaC2-a</shortName>
    </alternativeName>
    <alternativeName>
        <fullName>Synaptotagmin-like protein 2a</fullName>
    </alternativeName>
</protein>
<reference key="1">
    <citation type="journal article" date="2001" name="Biochem. Biophys. Res. Commun.">
        <title>Novel splicing isoforms of synaptotagmin-like proteins 2 and 3: identification of the Slp homology domain.</title>
        <authorList>
            <person name="Fukuda M."/>
            <person name="Saegusa C."/>
            <person name="Mikoshiba K."/>
        </authorList>
    </citation>
    <scope>NUCLEOTIDE SEQUENCE [MRNA]</scope>
    <source>
        <strain>BALB/cJ</strain>
        <tissue>Brain</tissue>
    </source>
</reference>
<reference key="2">
    <citation type="journal article" date="2001" name="Proc. Natl. Acad. Sci. U.S.A.">
        <title>Mutations in Mlph, encoding a member of the Rab effector family, cause the melanosome transport defects observed in leaden mice.</title>
        <authorList>
            <person name="Matesic L.E."/>
            <person name="Yip R."/>
            <person name="Reuss A.E."/>
            <person name="Swing D.A."/>
            <person name="O'Sullivan T.N."/>
            <person name="Fletcher C.F."/>
            <person name="Copeland N.G."/>
            <person name="Jenkins N.A."/>
        </authorList>
    </citation>
    <scope>NUCLEOTIDE SEQUENCE [MRNA]</scope>
    <scope>FUNCTION</scope>
    <scope>TISSUE SPECIFICITY</scope>
</reference>
<reference key="3">
    <citation type="journal article" date="2005" name="Science">
        <title>The transcriptional landscape of the mammalian genome.</title>
        <authorList>
            <person name="Carninci P."/>
            <person name="Kasukawa T."/>
            <person name="Katayama S."/>
            <person name="Gough J."/>
            <person name="Frith M.C."/>
            <person name="Maeda N."/>
            <person name="Oyama R."/>
            <person name="Ravasi T."/>
            <person name="Lenhard B."/>
            <person name="Wells C."/>
            <person name="Kodzius R."/>
            <person name="Shimokawa K."/>
            <person name="Bajic V.B."/>
            <person name="Brenner S.E."/>
            <person name="Batalov S."/>
            <person name="Forrest A.R."/>
            <person name="Zavolan M."/>
            <person name="Davis M.J."/>
            <person name="Wilming L.G."/>
            <person name="Aidinis V."/>
            <person name="Allen J.E."/>
            <person name="Ambesi-Impiombato A."/>
            <person name="Apweiler R."/>
            <person name="Aturaliya R.N."/>
            <person name="Bailey T.L."/>
            <person name="Bansal M."/>
            <person name="Baxter L."/>
            <person name="Beisel K.W."/>
            <person name="Bersano T."/>
            <person name="Bono H."/>
            <person name="Chalk A.M."/>
            <person name="Chiu K.P."/>
            <person name="Choudhary V."/>
            <person name="Christoffels A."/>
            <person name="Clutterbuck D.R."/>
            <person name="Crowe M.L."/>
            <person name="Dalla E."/>
            <person name="Dalrymple B.P."/>
            <person name="de Bono B."/>
            <person name="Della Gatta G."/>
            <person name="di Bernardo D."/>
            <person name="Down T."/>
            <person name="Engstrom P."/>
            <person name="Fagiolini M."/>
            <person name="Faulkner G."/>
            <person name="Fletcher C.F."/>
            <person name="Fukushima T."/>
            <person name="Furuno M."/>
            <person name="Futaki S."/>
            <person name="Gariboldi M."/>
            <person name="Georgii-Hemming P."/>
            <person name="Gingeras T.R."/>
            <person name="Gojobori T."/>
            <person name="Green R.E."/>
            <person name="Gustincich S."/>
            <person name="Harbers M."/>
            <person name="Hayashi Y."/>
            <person name="Hensch T.K."/>
            <person name="Hirokawa N."/>
            <person name="Hill D."/>
            <person name="Huminiecki L."/>
            <person name="Iacono M."/>
            <person name="Ikeo K."/>
            <person name="Iwama A."/>
            <person name="Ishikawa T."/>
            <person name="Jakt M."/>
            <person name="Kanapin A."/>
            <person name="Katoh M."/>
            <person name="Kawasawa Y."/>
            <person name="Kelso J."/>
            <person name="Kitamura H."/>
            <person name="Kitano H."/>
            <person name="Kollias G."/>
            <person name="Krishnan S.P."/>
            <person name="Kruger A."/>
            <person name="Kummerfeld S.K."/>
            <person name="Kurochkin I.V."/>
            <person name="Lareau L.F."/>
            <person name="Lazarevic D."/>
            <person name="Lipovich L."/>
            <person name="Liu J."/>
            <person name="Liuni S."/>
            <person name="McWilliam S."/>
            <person name="Madan Babu M."/>
            <person name="Madera M."/>
            <person name="Marchionni L."/>
            <person name="Matsuda H."/>
            <person name="Matsuzawa S."/>
            <person name="Miki H."/>
            <person name="Mignone F."/>
            <person name="Miyake S."/>
            <person name="Morris K."/>
            <person name="Mottagui-Tabar S."/>
            <person name="Mulder N."/>
            <person name="Nakano N."/>
            <person name="Nakauchi H."/>
            <person name="Ng P."/>
            <person name="Nilsson R."/>
            <person name="Nishiguchi S."/>
            <person name="Nishikawa S."/>
            <person name="Nori F."/>
            <person name="Ohara O."/>
            <person name="Okazaki Y."/>
            <person name="Orlando V."/>
            <person name="Pang K.C."/>
            <person name="Pavan W.J."/>
            <person name="Pavesi G."/>
            <person name="Pesole G."/>
            <person name="Petrovsky N."/>
            <person name="Piazza S."/>
            <person name="Reed J."/>
            <person name="Reid J.F."/>
            <person name="Ring B.Z."/>
            <person name="Ringwald M."/>
            <person name="Rost B."/>
            <person name="Ruan Y."/>
            <person name="Salzberg S.L."/>
            <person name="Sandelin A."/>
            <person name="Schneider C."/>
            <person name="Schoenbach C."/>
            <person name="Sekiguchi K."/>
            <person name="Semple C.A."/>
            <person name="Seno S."/>
            <person name="Sessa L."/>
            <person name="Sheng Y."/>
            <person name="Shibata Y."/>
            <person name="Shimada H."/>
            <person name="Shimada K."/>
            <person name="Silva D."/>
            <person name="Sinclair B."/>
            <person name="Sperling S."/>
            <person name="Stupka E."/>
            <person name="Sugiura K."/>
            <person name="Sultana R."/>
            <person name="Takenaka Y."/>
            <person name="Taki K."/>
            <person name="Tammoja K."/>
            <person name="Tan S.L."/>
            <person name="Tang S."/>
            <person name="Taylor M.S."/>
            <person name="Tegner J."/>
            <person name="Teichmann S.A."/>
            <person name="Ueda H.R."/>
            <person name="van Nimwegen E."/>
            <person name="Verardo R."/>
            <person name="Wei C.L."/>
            <person name="Yagi K."/>
            <person name="Yamanishi H."/>
            <person name="Zabarovsky E."/>
            <person name="Zhu S."/>
            <person name="Zimmer A."/>
            <person name="Hide W."/>
            <person name="Bult C."/>
            <person name="Grimmond S.M."/>
            <person name="Teasdale R.D."/>
            <person name="Liu E.T."/>
            <person name="Brusic V."/>
            <person name="Quackenbush J."/>
            <person name="Wahlestedt C."/>
            <person name="Mattick J.S."/>
            <person name="Hume D.A."/>
            <person name="Kai C."/>
            <person name="Sasaki D."/>
            <person name="Tomaru Y."/>
            <person name="Fukuda S."/>
            <person name="Kanamori-Katayama M."/>
            <person name="Suzuki M."/>
            <person name="Aoki J."/>
            <person name="Arakawa T."/>
            <person name="Iida J."/>
            <person name="Imamura K."/>
            <person name="Itoh M."/>
            <person name="Kato T."/>
            <person name="Kawaji H."/>
            <person name="Kawagashira N."/>
            <person name="Kawashima T."/>
            <person name="Kojima M."/>
            <person name="Kondo S."/>
            <person name="Konno H."/>
            <person name="Nakano K."/>
            <person name="Ninomiya N."/>
            <person name="Nishio T."/>
            <person name="Okada M."/>
            <person name="Plessy C."/>
            <person name="Shibata K."/>
            <person name="Shiraki T."/>
            <person name="Suzuki S."/>
            <person name="Tagami M."/>
            <person name="Waki K."/>
            <person name="Watahiki A."/>
            <person name="Okamura-Oho Y."/>
            <person name="Suzuki H."/>
            <person name="Kawai J."/>
            <person name="Hayashizaki Y."/>
        </authorList>
    </citation>
    <scope>NUCLEOTIDE SEQUENCE [LARGE SCALE MRNA]</scope>
    <source>
        <strain>C57BL/6J</strain>
        <tissue>Melanoma</tissue>
    </source>
</reference>
<reference key="4">
    <citation type="journal article" date="2002" name="Nat. Cell Biol.">
        <title>Identification of an organelle receptor for myosin-Va.</title>
        <authorList>
            <person name="Wu X.S."/>
            <person name="Rao K."/>
            <person name="Zhang H."/>
            <person name="Wang F."/>
            <person name="Sellers J.R."/>
            <person name="Matesic L.E."/>
            <person name="Copeland N.G."/>
            <person name="Jenkins N.A."/>
            <person name="Hammer J.A. III"/>
        </authorList>
    </citation>
    <scope>INTERACTION WITH RAB27A AND MYO5A</scope>
    <scope>FUNCTION</scope>
</reference>
<reference key="5">
    <citation type="journal article" date="2008" name="Structure">
        <title>Structural basis for the exclusive specificity of Slac2-a/melanophilin for the Rab27 GTPases.</title>
        <authorList>
            <person name="Kukimoto-Niino M."/>
            <person name="Sakamoto A."/>
            <person name="Kanno E."/>
            <person name="Hanawa-Suetsugu K."/>
            <person name="Terada T."/>
            <person name="Shirouzu M."/>
            <person name="Fukuda M."/>
            <person name="Yokoyama S."/>
        </authorList>
    </citation>
    <scope>X-RAY CRYSTALLOGRAPHY (3.0 ANGSTROMS) OF 1-146 IN COMPLEX WITH RAB27B</scope>
    <scope>SUBUNIT</scope>
</reference>
<reference key="6">
    <citation type="journal article" date="2013" name="Proc. Natl. Acad. Sci. U.S.A.">
        <title>Structural basis of cargo recognitions for class V myosins.</title>
        <authorList>
            <person name="Wei Z."/>
            <person name="Liu X."/>
            <person name="Yu C."/>
            <person name="Zhang M."/>
        </authorList>
    </citation>
    <scope>X-RAY CRYSTALLOGRAPHY (2.4 ANGSTROMS) OF 170-208 IN COMPLEX WITH MYO5A</scope>
    <scope>SUBUNIT</scope>
</reference>
<evidence type="ECO:0000255" key="1"/>
<evidence type="ECO:0000255" key="2">
    <source>
        <dbReference type="PROSITE-ProRule" id="PRU00234"/>
    </source>
</evidence>
<evidence type="ECO:0000256" key="3">
    <source>
        <dbReference type="SAM" id="MobiDB-lite"/>
    </source>
</evidence>
<evidence type="ECO:0000269" key="4">
    <source>
    </source>
</evidence>
<evidence type="ECO:0000269" key="5">
    <source>
    </source>
</evidence>
<evidence type="ECO:0000269" key="6">
    <source>
    </source>
</evidence>
<evidence type="ECO:0000269" key="7">
    <source>
    </source>
</evidence>
<evidence type="ECO:0000305" key="8"/>
<evidence type="ECO:0007829" key="9">
    <source>
        <dbReference type="PDB" id="2ZET"/>
    </source>
</evidence>
<evidence type="ECO:0007829" key="10">
    <source>
        <dbReference type="PDB" id="4LX2"/>
    </source>
</evidence>